<dbReference type="EC" id="6.1.1.10" evidence="1"/>
<dbReference type="EMBL" id="CP000853">
    <property type="protein sequence ID" value="ABW18550.1"/>
    <property type="molecule type" value="Genomic_DNA"/>
</dbReference>
<dbReference type="RefSeq" id="WP_012158862.1">
    <property type="nucleotide sequence ID" value="NC_009922.1"/>
</dbReference>
<dbReference type="SMR" id="A8MG12"/>
<dbReference type="STRING" id="350688.Clos_1003"/>
<dbReference type="KEGG" id="aoe:Clos_1003"/>
<dbReference type="eggNOG" id="COG0143">
    <property type="taxonomic scope" value="Bacteria"/>
</dbReference>
<dbReference type="HOGENOM" id="CLU_009710_1_2_9"/>
<dbReference type="OrthoDB" id="9810191at2"/>
<dbReference type="Proteomes" id="UP000000269">
    <property type="component" value="Chromosome"/>
</dbReference>
<dbReference type="GO" id="GO:0005829">
    <property type="term" value="C:cytosol"/>
    <property type="evidence" value="ECO:0007669"/>
    <property type="project" value="TreeGrafter"/>
</dbReference>
<dbReference type="GO" id="GO:0005524">
    <property type="term" value="F:ATP binding"/>
    <property type="evidence" value="ECO:0007669"/>
    <property type="project" value="UniProtKB-UniRule"/>
</dbReference>
<dbReference type="GO" id="GO:0046872">
    <property type="term" value="F:metal ion binding"/>
    <property type="evidence" value="ECO:0007669"/>
    <property type="project" value="UniProtKB-KW"/>
</dbReference>
<dbReference type="GO" id="GO:0004825">
    <property type="term" value="F:methionine-tRNA ligase activity"/>
    <property type="evidence" value="ECO:0007669"/>
    <property type="project" value="UniProtKB-UniRule"/>
</dbReference>
<dbReference type="GO" id="GO:0006431">
    <property type="term" value="P:methionyl-tRNA aminoacylation"/>
    <property type="evidence" value="ECO:0007669"/>
    <property type="project" value="UniProtKB-UniRule"/>
</dbReference>
<dbReference type="CDD" id="cd07957">
    <property type="entry name" value="Anticodon_Ia_Met"/>
    <property type="match status" value="1"/>
</dbReference>
<dbReference type="CDD" id="cd00814">
    <property type="entry name" value="MetRS_core"/>
    <property type="match status" value="1"/>
</dbReference>
<dbReference type="Gene3D" id="3.40.50.620">
    <property type="entry name" value="HUPs"/>
    <property type="match status" value="1"/>
</dbReference>
<dbReference type="Gene3D" id="1.10.730.10">
    <property type="entry name" value="Isoleucyl-tRNA Synthetase, Domain 1"/>
    <property type="match status" value="1"/>
</dbReference>
<dbReference type="Gene3D" id="2.20.28.20">
    <property type="entry name" value="Methionyl-tRNA synthetase, Zn-domain"/>
    <property type="match status" value="1"/>
</dbReference>
<dbReference type="HAMAP" id="MF_00098">
    <property type="entry name" value="Met_tRNA_synth_type1"/>
    <property type="match status" value="1"/>
</dbReference>
<dbReference type="InterPro" id="IPR001412">
    <property type="entry name" value="aa-tRNA-synth_I_CS"/>
</dbReference>
<dbReference type="InterPro" id="IPR041872">
    <property type="entry name" value="Anticodon_Met"/>
</dbReference>
<dbReference type="InterPro" id="IPR023458">
    <property type="entry name" value="Met-tRNA_ligase_1"/>
</dbReference>
<dbReference type="InterPro" id="IPR014758">
    <property type="entry name" value="Met-tRNA_synth"/>
</dbReference>
<dbReference type="InterPro" id="IPR015413">
    <property type="entry name" value="Methionyl/Leucyl_tRNA_Synth"/>
</dbReference>
<dbReference type="InterPro" id="IPR033911">
    <property type="entry name" value="MetRS_core"/>
</dbReference>
<dbReference type="InterPro" id="IPR029038">
    <property type="entry name" value="MetRS_Zn"/>
</dbReference>
<dbReference type="InterPro" id="IPR014729">
    <property type="entry name" value="Rossmann-like_a/b/a_fold"/>
</dbReference>
<dbReference type="InterPro" id="IPR009080">
    <property type="entry name" value="tRNAsynth_Ia_anticodon-bd"/>
</dbReference>
<dbReference type="NCBIfam" id="TIGR00398">
    <property type="entry name" value="metG"/>
    <property type="match status" value="1"/>
</dbReference>
<dbReference type="PANTHER" id="PTHR45765">
    <property type="entry name" value="METHIONINE--TRNA LIGASE"/>
    <property type="match status" value="1"/>
</dbReference>
<dbReference type="PANTHER" id="PTHR45765:SF1">
    <property type="entry name" value="METHIONINE--TRNA LIGASE, CYTOPLASMIC"/>
    <property type="match status" value="1"/>
</dbReference>
<dbReference type="Pfam" id="PF19303">
    <property type="entry name" value="Anticodon_3"/>
    <property type="match status" value="1"/>
</dbReference>
<dbReference type="Pfam" id="PF09334">
    <property type="entry name" value="tRNA-synt_1g"/>
    <property type="match status" value="1"/>
</dbReference>
<dbReference type="PRINTS" id="PR01041">
    <property type="entry name" value="TRNASYNTHMET"/>
</dbReference>
<dbReference type="SUPFAM" id="SSF47323">
    <property type="entry name" value="Anticodon-binding domain of a subclass of class I aminoacyl-tRNA synthetases"/>
    <property type="match status" value="1"/>
</dbReference>
<dbReference type="SUPFAM" id="SSF57770">
    <property type="entry name" value="Methionyl-tRNA synthetase (MetRS), Zn-domain"/>
    <property type="match status" value="1"/>
</dbReference>
<dbReference type="SUPFAM" id="SSF52374">
    <property type="entry name" value="Nucleotidylyl transferase"/>
    <property type="match status" value="1"/>
</dbReference>
<dbReference type="PROSITE" id="PS00178">
    <property type="entry name" value="AA_TRNA_LIGASE_I"/>
    <property type="match status" value="1"/>
</dbReference>
<reference key="1">
    <citation type="submission" date="2007-10" db="EMBL/GenBank/DDBJ databases">
        <title>Complete genome of Alkaliphilus oremlandii OhILAs.</title>
        <authorList>
            <person name="Copeland A."/>
            <person name="Lucas S."/>
            <person name="Lapidus A."/>
            <person name="Barry K."/>
            <person name="Detter J.C."/>
            <person name="Glavina del Rio T."/>
            <person name="Hammon N."/>
            <person name="Israni S."/>
            <person name="Dalin E."/>
            <person name="Tice H."/>
            <person name="Pitluck S."/>
            <person name="Chain P."/>
            <person name="Malfatti S."/>
            <person name="Shin M."/>
            <person name="Vergez L."/>
            <person name="Schmutz J."/>
            <person name="Larimer F."/>
            <person name="Land M."/>
            <person name="Hauser L."/>
            <person name="Kyrpides N."/>
            <person name="Mikhailova N."/>
            <person name="Stolz J.F."/>
            <person name="Dawson A."/>
            <person name="Fisher E."/>
            <person name="Crable B."/>
            <person name="Perera E."/>
            <person name="Lisak J."/>
            <person name="Ranganathan M."/>
            <person name="Basu P."/>
            <person name="Richardson P."/>
        </authorList>
    </citation>
    <scope>NUCLEOTIDE SEQUENCE [LARGE SCALE GENOMIC DNA]</scope>
    <source>
        <strain>OhILAs</strain>
    </source>
</reference>
<gene>
    <name evidence="1" type="primary">metG1</name>
    <name type="ordered locus">Clos_1003</name>
</gene>
<keyword id="KW-0030">Aminoacyl-tRNA synthetase</keyword>
<keyword id="KW-0067">ATP-binding</keyword>
<keyword id="KW-0963">Cytoplasm</keyword>
<keyword id="KW-0436">Ligase</keyword>
<keyword id="KW-0479">Metal-binding</keyword>
<keyword id="KW-0547">Nucleotide-binding</keyword>
<keyword id="KW-0648">Protein biosynthesis</keyword>
<keyword id="KW-1185">Reference proteome</keyword>
<keyword id="KW-0862">Zinc</keyword>
<protein>
    <recommendedName>
        <fullName evidence="1">Methionine--tRNA ligase 1</fullName>
        <ecNumber evidence="1">6.1.1.10</ecNumber>
    </recommendedName>
    <alternativeName>
        <fullName evidence="1">Methionyl-tRNA synthetase 1</fullName>
        <shortName evidence="1">MetRS 1</shortName>
    </alternativeName>
</protein>
<feature type="chain" id="PRO_0000331778" description="Methionine--tRNA ligase 1">
    <location>
        <begin position="1"/>
        <end position="540"/>
    </location>
</feature>
<feature type="short sequence motif" description="'HIGH' region">
    <location>
        <begin position="10"/>
        <end position="20"/>
    </location>
</feature>
<feature type="short sequence motif" description="'KMSKS' region">
    <location>
        <begin position="327"/>
        <end position="331"/>
    </location>
</feature>
<feature type="binding site" evidence="1">
    <location>
        <position position="141"/>
    </location>
    <ligand>
        <name>Zn(2+)</name>
        <dbReference type="ChEBI" id="CHEBI:29105"/>
    </ligand>
</feature>
<feature type="binding site" evidence="1">
    <location>
        <position position="144"/>
    </location>
    <ligand>
        <name>Zn(2+)</name>
        <dbReference type="ChEBI" id="CHEBI:29105"/>
    </ligand>
</feature>
<feature type="binding site" evidence="1">
    <location>
        <position position="153"/>
    </location>
    <ligand>
        <name>Zn(2+)</name>
        <dbReference type="ChEBI" id="CHEBI:29105"/>
    </ligand>
</feature>
<feature type="binding site" evidence="1">
    <location>
        <position position="156"/>
    </location>
    <ligand>
        <name>Zn(2+)</name>
        <dbReference type="ChEBI" id="CHEBI:29105"/>
    </ligand>
</feature>
<feature type="binding site" evidence="1">
    <location>
        <position position="330"/>
    </location>
    <ligand>
        <name>ATP</name>
        <dbReference type="ChEBI" id="CHEBI:30616"/>
    </ligand>
</feature>
<accession>A8MG12</accession>
<evidence type="ECO:0000255" key="1">
    <source>
        <dbReference type="HAMAP-Rule" id="MF_00098"/>
    </source>
</evidence>
<sequence>MNIFIGGAWPYANGSLHLGHVAALLPGDVMARYFRAKGENVLYVSGSDCHGTPISIRAKNENVSPQEIAEQYHKEFKYCFEELGFSYDYYSRTDDAYHKEEVQRIIKLLYENEFIYEKEVEQLYCADCNQFLPDRFVEGICPVCKNIARGDQCDVCSTILDPLDLHHRKCKICGSEPEIKNGNQLFFKLSKFQEMLQNHLEDSKKKWRVNALNNTERYLKEGLQDRAISRDLNWGIEIPIKGYEEKRVYVWIDAVLGYYTVSKKWGIERNRDWETFWSKEAIHYFIHGKDNIPFHSLIFPALLNGIGYKKMPDRIISSEYITLEGKKISTSNNWAVWVPDMIERYNVDSIRYFLLANGPEKRDADFSWREFINSNNGELLGAYGNLVNRTFVFVKKYFNNTIPVGKLEEEIERATEKLYDEVGKSIESGNLRLALEQIFQFIRSINKYFDEETPWTTVNTNIDDCSNTIYNCLFSIINIANLLNPFLPSSSAKIKEWMGCKEASWNKLSLSSGIQLGDFNILFERLDKKLAEEELAKLGR</sequence>
<name>SYM1_ALKOO</name>
<comment type="function">
    <text evidence="1">Is required not only for elongation of protein synthesis but also for the initiation of all mRNA translation through initiator tRNA(fMet) aminoacylation.</text>
</comment>
<comment type="catalytic activity">
    <reaction evidence="1">
        <text>tRNA(Met) + L-methionine + ATP = L-methionyl-tRNA(Met) + AMP + diphosphate</text>
        <dbReference type="Rhea" id="RHEA:13481"/>
        <dbReference type="Rhea" id="RHEA-COMP:9667"/>
        <dbReference type="Rhea" id="RHEA-COMP:9698"/>
        <dbReference type="ChEBI" id="CHEBI:30616"/>
        <dbReference type="ChEBI" id="CHEBI:33019"/>
        <dbReference type="ChEBI" id="CHEBI:57844"/>
        <dbReference type="ChEBI" id="CHEBI:78442"/>
        <dbReference type="ChEBI" id="CHEBI:78530"/>
        <dbReference type="ChEBI" id="CHEBI:456215"/>
        <dbReference type="EC" id="6.1.1.10"/>
    </reaction>
</comment>
<comment type="cofactor">
    <cofactor evidence="1">
        <name>Zn(2+)</name>
        <dbReference type="ChEBI" id="CHEBI:29105"/>
    </cofactor>
    <text evidence="1">Binds 1 zinc ion per subunit.</text>
</comment>
<comment type="subunit">
    <text evidence="1">Monomer.</text>
</comment>
<comment type="subcellular location">
    <subcellularLocation>
        <location evidence="1">Cytoplasm</location>
    </subcellularLocation>
</comment>
<comment type="similarity">
    <text evidence="1">Belongs to the class-I aminoacyl-tRNA synthetase family. MetG type 1 subfamily.</text>
</comment>
<organism>
    <name type="scientific">Alkaliphilus oremlandii (strain OhILAs)</name>
    <name type="common">Clostridium oremlandii (strain OhILAs)</name>
    <dbReference type="NCBI Taxonomy" id="350688"/>
    <lineage>
        <taxon>Bacteria</taxon>
        <taxon>Bacillati</taxon>
        <taxon>Bacillota</taxon>
        <taxon>Clostridia</taxon>
        <taxon>Peptostreptococcales</taxon>
        <taxon>Natronincolaceae</taxon>
        <taxon>Alkaliphilus</taxon>
    </lineage>
</organism>
<proteinExistence type="inferred from homology"/>